<accession>Q63GQ9</accession>
<evidence type="ECO:0000255" key="1">
    <source>
        <dbReference type="HAMAP-Rule" id="MF_00121"/>
    </source>
</evidence>
<reference key="1">
    <citation type="journal article" date="2006" name="J. Bacteriol.">
        <title>Pathogenomic sequence analysis of Bacillus cereus and Bacillus thuringiensis isolates closely related to Bacillus anthracis.</title>
        <authorList>
            <person name="Han C.S."/>
            <person name="Xie G."/>
            <person name="Challacombe J.F."/>
            <person name="Altherr M.R."/>
            <person name="Bhotika S.S."/>
            <person name="Bruce D."/>
            <person name="Campbell C.S."/>
            <person name="Campbell M.L."/>
            <person name="Chen J."/>
            <person name="Chertkov O."/>
            <person name="Cleland C."/>
            <person name="Dimitrijevic M."/>
            <person name="Doggett N.A."/>
            <person name="Fawcett J.J."/>
            <person name="Glavina T."/>
            <person name="Goodwin L.A."/>
            <person name="Hill K.K."/>
            <person name="Hitchcock P."/>
            <person name="Jackson P.J."/>
            <person name="Keim P."/>
            <person name="Kewalramani A.R."/>
            <person name="Longmire J."/>
            <person name="Lucas S."/>
            <person name="Malfatti S."/>
            <person name="McMurry K."/>
            <person name="Meincke L.J."/>
            <person name="Misra M."/>
            <person name="Moseman B.L."/>
            <person name="Mundt M."/>
            <person name="Munk A.C."/>
            <person name="Okinaka R.T."/>
            <person name="Parson-Quintana B."/>
            <person name="Reilly L.P."/>
            <person name="Richardson P."/>
            <person name="Robinson D.L."/>
            <person name="Rubin E."/>
            <person name="Saunders E."/>
            <person name="Tapia R."/>
            <person name="Tesmer J.G."/>
            <person name="Thayer N."/>
            <person name="Thompson L.S."/>
            <person name="Tice H."/>
            <person name="Ticknor L.O."/>
            <person name="Wills P.L."/>
            <person name="Brettin T.S."/>
            <person name="Gilna P."/>
        </authorList>
    </citation>
    <scope>NUCLEOTIDE SEQUENCE [LARGE SCALE GENOMIC DNA]</scope>
    <source>
        <strain>ZK / E33L</strain>
    </source>
</reference>
<proteinExistence type="inferred from homology"/>
<dbReference type="EC" id="6.3.5.-" evidence="1"/>
<dbReference type="EMBL" id="CP000001">
    <property type="protein sequence ID" value="AAU19946.1"/>
    <property type="molecule type" value="Genomic_DNA"/>
</dbReference>
<dbReference type="RefSeq" id="WP_001047685.1">
    <property type="nucleotide sequence ID" value="NZ_CP009968.1"/>
</dbReference>
<dbReference type="SMR" id="Q63GQ9"/>
<dbReference type="GeneID" id="93010703"/>
<dbReference type="KEGG" id="bcz:BCE33L0293"/>
<dbReference type="PATRIC" id="fig|288681.22.peg.5313"/>
<dbReference type="Proteomes" id="UP000002612">
    <property type="component" value="Chromosome"/>
</dbReference>
<dbReference type="GO" id="GO:0050566">
    <property type="term" value="F:asparaginyl-tRNA synthase (glutamine-hydrolyzing) activity"/>
    <property type="evidence" value="ECO:0007669"/>
    <property type="project" value="RHEA"/>
</dbReference>
<dbReference type="GO" id="GO:0005524">
    <property type="term" value="F:ATP binding"/>
    <property type="evidence" value="ECO:0007669"/>
    <property type="project" value="UniProtKB-KW"/>
</dbReference>
<dbReference type="GO" id="GO:0050567">
    <property type="term" value="F:glutaminyl-tRNA synthase (glutamine-hydrolyzing) activity"/>
    <property type="evidence" value="ECO:0007669"/>
    <property type="project" value="UniProtKB-UniRule"/>
</dbReference>
<dbReference type="GO" id="GO:0070681">
    <property type="term" value="P:glutaminyl-tRNAGln biosynthesis via transamidation"/>
    <property type="evidence" value="ECO:0007669"/>
    <property type="project" value="TreeGrafter"/>
</dbReference>
<dbReference type="GO" id="GO:0006412">
    <property type="term" value="P:translation"/>
    <property type="evidence" value="ECO:0007669"/>
    <property type="project" value="UniProtKB-UniRule"/>
</dbReference>
<dbReference type="FunFam" id="1.10.10.410:FF:000001">
    <property type="entry name" value="Aspartyl/glutamyl-tRNA(Asn/Gln) amidotransferase subunit B"/>
    <property type="match status" value="1"/>
</dbReference>
<dbReference type="FunFam" id="1.10.150.380:FF:000001">
    <property type="entry name" value="Aspartyl/glutamyl-tRNA(Asn/Gln) amidotransferase subunit B"/>
    <property type="match status" value="1"/>
</dbReference>
<dbReference type="Gene3D" id="1.10.10.410">
    <property type="match status" value="1"/>
</dbReference>
<dbReference type="Gene3D" id="1.10.150.380">
    <property type="entry name" value="GatB domain, N-terminal subdomain"/>
    <property type="match status" value="1"/>
</dbReference>
<dbReference type="HAMAP" id="MF_00121">
    <property type="entry name" value="GatB"/>
    <property type="match status" value="1"/>
</dbReference>
<dbReference type="InterPro" id="IPR017959">
    <property type="entry name" value="Asn/Gln-tRNA_amidoTrfase_suB/E"/>
</dbReference>
<dbReference type="InterPro" id="IPR006075">
    <property type="entry name" value="Asn/Gln-tRNA_Trfase_suB/E_cat"/>
</dbReference>
<dbReference type="InterPro" id="IPR018027">
    <property type="entry name" value="Asn/Gln_amidotransferase"/>
</dbReference>
<dbReference type="InterPro" id="IPR003789">
    <property type="entry name" value="Asn/Gln_tRNA_amidoTrase-B-like"/>
</dbReference>
<dbReference type="InterPro" id="IPR004413">
    <property type="entry name" value="GatB"/>
</dbReference>
<dbReference type="InterPro" id="IPR042114">
    <property type="entry name" value="GatB_C_1"/>
</dbReference>
<dbReference type="InterPro" id="IPR023168">
    <property type="entry name" value="GatB_Yqey_C_2"/>
</dbReference>
<dbReference type="InterPro" id="IPR017958">
    <property type="entry name" value="Gln-tRNA_amidoTrfase_suB_CS"/>
</dbReference>
<dbReference type="InterPro" id="IPR014746">
    <property type="entry name" value="Gln_synth/guanido_kin_cat_dom"/>
</dbReference>
<dbReference type="NCBIfam" id="TIGR00133">
    <property type="entry name" value="gatB"/>
    <property type="match status" value="1"/>
</dbReference>
<dbReference type="NCBIfam" id="NF004011">
    <property type="entry name" value="PRK05477.1-1"/>
    <property type="match status" value="1"/>
</dbReference>
<dbReference type="NCBIfam" id="NF004012">
    <property type="entry name" value="PRK05477.1-2"/>
    <property type="match status" value="1"/>
</dbReference>
<dbReference type="NCBIfam" id="NF004014">
    <property type="entry name" value="PRK05477.1-4"/>
    <property type="match status" value="1"/>
</dbReference>
<dbReference type="PANTHER" id="PTHR11659">
    <property type="entry name" value="GLUTAMYL-TRNA GLN AMIDOTRANSFERASE SUBUNIT B MITOCHONDRIAL AND PROKARYOTIC PET112-RELATED"/>
    <property type="match status" value="1"/>
</dbReference>
<dbReference type="PANTHER" id="PTHR11659:SF0">
    <property type="entry name" value="GLUTAMYL-TRNA(GLN) AMIDOTRANSFERASE SUBUNIT B, MITOCHONDRIAL"/>
    <property type="match status" value="1"/>
</dbReference>
<dbReference type="Pfam" id="PF02934">
    <property type="entry name" value="GatB_N"/>
    <property type="match status" value="1"/>
</dbReference>
<dbReference type="Pfam" id="PF02637">
    <property type="entry name" value="GatB_Yqey"/>
    <property type="match status" value="1"/>
</dbReference>
<dbReference type="SMART" id="SM00845">
    <property type="entry name" value="GatB_Yqey"/>
    <property type="match status" value="1"/>
</dbReference>
<dbReference type="SUPFAM" id="SSF89095">
    <property type="entry name" value="GatB/YqeY motif"/>
    <property type="match status" value="1"/>
</dbReference>
<dbReference type="SUPFAM" id="SSF55931">
    <property type="entry name" value="Glutamine synthetase/guanido kinase"/>
    <property type="match status" value="1"/>
</dbReference>
<dbReference type="PROSITE" id="PS01234">
    <property type="entry name" value="GATB"/>
    <property type="match status" value="1"/>
</dbReference>
<keyword id="KW-0067">ATP-binding</keyword>
<keyword id="KW-0436">Ligase</keyword>
<keyword id="KW-0547">Nucleotide-binding</keyword>
<keyword id="KW-0648">Protein biosynthesis</keyword>
<gene>
    <name evidence="1" type="primary">gatB</name>
    <name type="ordered locus">BCE33L0293</name>
</gene>
<comment type="function">
    <text evidence="1">Allows the formation of correctly charged Asn-tRNA(Asn) or Gln-tRNA(Gln) through the transamidation of misacylated Asp-tRNA(Asn) or Glu-tRNA(Gln) in organisms which lack either or both of asparaginyl-tRNA or glutaminyl-tRNA synthetases. The reaction takes place in the presence of glutamine and ATP through an activated phospho-Asp-tRNA(Asn) or phospho-Glu-tRNA(Gln).</text>
</comment>
<comment type="catalytic activity">
    <reaction evidence="1">
        <text>L-glutamyl-tRNA(Gln) + L-glutamine + ATP + H2O = L-glutaminyl-tRNA(Gln) + L-glutamate + ADP + phosphate + H(+)</text>
        <dbReference type="Rhea" id="RHEA:17521"/>
        <dbReference type="Rhea" id="RHEA-COMP:9681"/>
        <dbReference type="Rhea" id="RHEA-COMP:9684"/>
        <dbReference type="ChEBI" id="CHEBI:15377"/>
        <dbReference type="ChEBI" id="CHEBI:15378"/>
        <dbReference type="ChEBI" id="CHEBI:29985"/>
        <dbReference type="ChEBI" id="CHEBI:30616"/>
        <dbReference type="ChEBI" id="CHEBI:43474"/>
        <dbReference type="ChEBI" id="CHEBI:58359"/>
        <dbReference type="ChEBI" id="CHEBI:78520"/>
        <dbReference type="ChEBI" id="CHEBI:78521"/>
        <dbReference type="ChEBI" id="CHEBI:456216"/>
    </reaction>
</comment>
<comment type="catalytic activity">
    <reaction evidence="1">
        <text>L-aspartyl-tRNA(Asn) + L-glutamine + ATP + H2O = L-asparaginyl-tRNA(Asn) + L-glutamate + ADP + phosphate + 2 H(+)</text>
        <dbReference type="Rhea" id="RHEA:14513"/>
        <dbReference type="Rhea" id="RHEA-COMP:9674"/>
        <dbReference type="Rhea" id="RHEA-COMP:9677"/>
        <dbReference type="ChEBI" id="CHEBI:15377"/>
        <dbReference type="ChEBI" id="CHEBI:15378"/>
        <dbReference type="ChEBI" id="CHEBI:29985"/>
        <dbReference type="ChEBI" id="CHEBI:30616"/>
        <dbReference type="ChEBI" id="CHEBI:43474"/>
        <dbReference type="ChEBI" id="CHEBI:58359"/>
        <dbReference type="ChEBI" id="CHEBI:78515"/>
        <dbReference type="ChEBI" id="CHEBI:78516"/>
        <dbReference type="ChEBI" id="CHEBI:456216"/>
    </reaction>
</comment>
<comment type="subunit">
    <text evidence="1">Heterotrimer of A, B and C subunits.</text>
</comment>
<comment type="similarity">
    <text evidence="1">Belongs to the GatB/GatE family. GatB subfamily.</text>
</comment>
<organism>
    <name type="scientific">Bacillus cereus (strain ZK / E33L)</name>
    <dbReference type="NCBI Taxonomy" id="288681"/>
    <lineage>
        <taxon>Bacteria</taxon>
        <taxon>Bacillati</taxon>
        <taxon>Bacillota</taxon>
        <taxon>Bacilli</taxon>
        <taxon>Bacillales</taxon>
        <taxon>Bacillaceae</taxon>
        <taxon>Bacillus</taxon>
        <taxon>Bacillus cereus group</taxon>
    </lineage>
</organism>
<protein>
    <recommendedName>
        <fullName evidence="1">Aspartyl/glutamyl-tRNA(Asn/Gln) amidotransferase subunit B</fullName>
        <shortName evidence="1">Asp/Glu-ADT subunit B</shortName>
        <ecNumber evidence="1">6.3.5.-</ecNumber>
    </recommendedName>
</protein>
<name>GATB_BACCZ</name>
<sequence length="475" mass="53238">MNLETIIGLEVHVELKTNSKIFSASPTEFGAEPNTQTSVIDLGYPGVLPTLNKEAVNFAMKAAMALNCEIATETKFDRKNYFYPDNPKAYQISQFDKPIGENGWIEIEVDGKKKRIGITRLHLEEDAGKSTHTADGSLVDYNRQGMPLIEIVSEPDMRTPEEAYAYLEKLKSIIQYTGVSDCKMEEGSLRCDANISLRPVGQEKFGTKAELKNLNSFTYVQKGLEHEQVRQEKELLSGGIIQQETRRYDEATKKTILMRVKEGSDDYRYFPEPDLVELYIDDEWKEAVRASIPELPDARKARYVAELGLPAYDAHVLTLTKEMSDFFEATVADGADAKLTSNWLMGEVLAYLNKQQKELKDVALTPAGLSKMVQLIEKGTISSKIAKKVFNELIEKGGDPEEIVKAKGLVQISDEGTLRKVVTEILDNNEQSIEDFKNGKDRAIGFLVGQIMKATKGQANPPLVNKILLEEINKR</sequence>
<feature type="chain" id="PRO_0000241192" description="Aspartyl/glutamyl-tRNA(Asn/Gln) amidotransferase subunit B">
    <location>
        <begin position="1"/>
        <end position="475"/>
    </location>
</feature>